<name>ATL2_MOUSE</name>
<evidence type="ECO:0000250" key="1"/>
<evidence type="ECO:0000255" key="2"/>
<evidence type="ECO:0000255" key="3">
    <source>
        <dbReference type="PROSITE-ProRule" id="PRU00210"/>
    </source>
</evidence>
<evidence type="ECO:0000255" key="4">
    <source>
        <dbReference type="PROSITE-ProRule" id="PRU00233"/>
    </source>
</evidence>
<evidence type="ECO:0000256" key="5">
    <source>
        <dbReference type="SAM" id="MobiDB-lite"/>
    </source>
</evidence>
<evidence type="ECO:0000305" key="6"/>
<gene>
    <name type="primary">Adamtsl2</name>
    <name type="synonym">Kiaa0605</name>
    <name type="synonym">Tcp1</name>
</gene>
<protein>
    <recommendedName>
        <fullName>ADAMTS-like protein 2</fullName>
        <shortName>ADAMTSL-2</shortName>
    </recommendedName>
    <alternativeName>
        <fullName>TSP1-repeat-containing protein 1</fullName>
        <shortName>TCP-1</shortName>
    </alternativeName>
</protein>
<sequence length="957" mass="105647">MDGRRQHPHWAWSLLAVAVVAGGAAPTEASDNSPTSNSLEGGADTTAYWWGEWTKWTACSRSCGGGVTSQERHCLQQRRKSVPGTGNRTCVGTSKRYQLCRVQECPPDGRSFREEQCVSFNSRVYDGRAYQWKPLYPDDYVHISSKPCDLHCSTVDGQRQLTVPARDGTSCKLTDLRGVCVSGKCEPIGCDGVLFSTHTLDKCGVCQGDGSSCTHVTGNYRKGNNHLGYSLVTHIPAGARDIQIVERKKSADVLALADEAGFYFFNGNYKVDSPKNFNIAGTVVKYRRPMDVYETGIEYIVAQGPTNQGLNVMVWNQNGKSPSITFEYTLLQSPHMHHLPPVYYSFSEAASQSTESTERQELDSARLLGFMQHNGSLYRQTSSERLGLNSQLFQPPAPEVELGPSRGQESNEVCKQASGGVCEGPPRGKGFQDHNATGRAFSADKDDREISAHFTSHELLSANTISDQLLGTGSESEEFSLNETMNSIFAQGAPRSSPAESLYVDYEENEGPAAYLINGSYLELSSDRINTSSEAPFPNTSASPPNLAGNRTHKARTRPKARKQGVSPADMYRWKLSSHEPCSATCTTGVMSTYAMCVRYDGVEVDDSYCDALTRPEPVHEFCAGRECQPRWETSSWSECSRTCGEGHQFRIVRCWKMLSPGFDSSVYSDLCEATEAVRPEERKTCRNPACGPQWEMSEWSECTAKCGERSVVTRDIRCSEDEKLCDPSTKPVGEKNCTGPPCDRQWTVSDWGPCSGSCGQGRTIRHVYCKTSDGRVVPESQCQTETKPLAIHPCGDKNCPAHWLAQDWERCNTTCGRGVKKRLVLCMELANGKPQIRSGPECGLARKPPEESTCFERPCFKWYTSPWSECTKTCGVGVRMRDVKCYQGTDIVRGCDPLVKPVGRQACDLQPCPTEPPDDSCQDQPGTNCALAIKVNLCGHWYYSKACCRSCRPPHS</sequence>
<organism>
    <name type="scientific">Mus musculus</name>
    <name type="common">Mouse</name>
    <dbReference type="NCBI Taxonomy" id="10090"/>
    <lineage>
        <taxon>Eukaryota</taxon>
        <taxon>Metazoa</taxon>
        <taxon>Chordata</taxon>
        <taxon>Craniata</taxon>
        <taxon>Vertebrata</taxon>
        <taxon>Euteleostomi</taxon>
        <taxon>Mammalia</taxon>
        <taxon>Eutheria</taxon>
        <taxon>Euarchontoglires</taxon>
        <taxon>Glires</taxon>
        <taxon>Rodentia</taxon>
        <taxon>Myomorpha</taxon>
        <taxon>Muroidea</taxon>
        <taxon>Muridae</taxon>
        <taxon>Murinae</taxon>
        <taxon>Mus</taxon>
        <taxon>Mus</taxon>
    </lineage>
</organism>
<accession>Q7TSK7</accession>
<accession>Q3U0C8</accession>
<feature type="signal peptide" evidence="2">
    <location>
        <begin position="1"/>
        <end position="29"/>
    </location>
</feature>
<feature type="chain" id="PRO_0000249683" description="ADAMTS-like protein 2">
    <location>
        <begin position="30"/>
        <end position="957"/>
    </location>
</feature>
<feature type="domain" description="TSP type-1 1" evidence="3">
    <location>
        <begin position="47"/>
        <end position="106"/>
    </location>
</feature>
<feature type="domain" description="TSP type-1 2" evidence="3">
    <location>
        <begin position="570"/>
        <end position="624"/>
    </location>
</feature>
<feature type="domain" description="TSP type-1 3" evidence="3">
    <location>
        <begin position="628"/>
        <end position="692"/>
    </location>
</feature>
<feature type="domain" description="TSP type-1 4" evidence="3">
    <location>
        <begin position="694"/>
        <end position="742"/>
    </location>
</feature>
<feature type="domain" description="TSP type-1 5" evidence="3">
    <location>
        <begin position="743"/>
        <end position="801"/>
    </location>
</feature>
<feature type="domain" description="TSP type-1 6" evidence="3">
    <location>
        <begin position="803"/>
        <end position="857"/>
    </location>
</feature>
<feature type="domain" description="TSP type-1 7" evidence="3">
    <location>
        <begin position="859"/>
        <end position="914"/>
    </location>
</feature>
<feature type="domain" description="PLAC" evidence="4">
    <location>
        <begin position="918"/>
        <end position="956"/>
    </location>
</feature>
<feature type="region of interest" description="Disordered" evidence="5">
    <location>
        <begin position="532"/>
        <end position="568"/>
    </location>
</feature>
<feature type="compositionally biased region" description="Polar residues" evidence="5">
    <location>
        <begin position="532"/>
        <end position="544"/>
    </location>
</feature>
<feature type="compositionally biased region" description="Basic residues" evidence="5">
    <location>
        <begin position="551"/>
        <end position="563"/>
    </location>
</feature>
<feature type="glycosylation site" description="N-linked (GlcNAc...) asparagine" evidence="2">
    <location>
        <position position="87"/>
    </location>
</feature>
<feature type="glycosylation site" description="N-linked (GlcNAc...) asparagine" evidence="2">
    <location>
        <position position="374"/>
    </location>
</feature>
<feature type="glycosylation site" description="N-linked (GlcNAc...) asparagine" evidence="2">
    <location>
        <position position="435"/>
    </location>
</feature>
<feature type="glycosylation site" description="N-linked (GlcNAc...) asparagine" evidence="2">
    <location>
        <position position="482"/>
    </location>
</feature>
<feature type="glycosylation site" description="N-linked (GlcNAc...) asparagine" evidence="2">
    <location>
        <position position="518"/>
    </location>
</feature>
<feature type="glycosylation site" description="N-linked (GlcNAc...) asparagine" evidence="2">
    <location>
        <position position="530"/>
    </location>
</feature>
<feature type="glycosylation site" description="N-linked (GlcNAc...) asparagine" evidence="2">
    <location>
        <position position="539"/>
    </location>
</feature>
<feature type="glycosylation site" description="N-linked (GlcNAc...) asparagine" evidence="2">
    <location>
        <position position="550"/>
    </location>
</feature>
<feature type="glycosylation site" description="N-linked (GlcNAc...) asparagine" evidence="2">
    <location>
        <position position="737"/>
    </location>
</feature>
<feature type="glycosylation site" description="N-linked (GlcNAc...) asparagine" evidence="2">
    <location>
        <position position="813"/>
    </location>
</feature>
<feature type="disulfide bond" evidence="3">
    <location>
        <begin position="59"/>
        <end position="100"/>
    </location>
</feature>
<feature type="disulfide bond" evidence="3">
    <location>
        <begin position="63"/>
        <end position="105"/>
    </location>
</feature>
<feature type="disulfide bond" evidence="3">
    <location>
        <begin position="74"/>
        <end position="90"/>
    </location>
</feature>
<feature type="sequence conflict" description="In Ref. 2; BAE33926." evidence="6" ref="2">
    <original>F</original>
    <variation>L</variation>
    <location>
        <position position="441"/>
    </location>
</feature>
<feature type="sequence conflict" description="In Ref. 2; BAE33926." evidence="6" ref="2">
    <original>V</original>
    <variation>A</variation>
    <location>
        <position position="749"/>
    </location>
</feature>
<reference key="1">
    <citation type="submission" date="2002-11" db="EMBL/GenBank/DDBJ databases">
        <title>Cloning of TSP1-repeats-containing protein expressed in splenic CD11c+ cells.</title>
        <authorList>
            <person name="Kishi Y."/>
            <person name="Toji S."/>
            <person name="Tanaka M."/>
            <person name="Miyajima A."/>
            <person name="Yahara I."/>
        </authorList>
    </citation>
    <scope>NUCLEOTIDE SEQUENCE [MRNA]</scope>
    <source>
        <strain>C57BL/6J</strain>
        <tissue>Spleen</tissue>
    </source>
</reference>
<reference key="2">
    <citation type="journal article" date="2005" name="Science">
        <title>The transcriptional landscape of the mammalian genome.</title>
        <authorList>
            <person name="Carninci P."/>
            <person name="Kasukawa T."/>
            <person name="Katayama S."/>
            <person name="Gough J."/>
            <person name="Frith M.C."/>
            <person name="Maeda N."/>
            <person name="Oyama R."/>
            <person name="Ravasi T."/>
            <person name="Lenhard B."/>
            <person name="Wells C."/>
            <person name="Kodzius R."/>
            <person name="Shimokawa K."/>
            <person name="Bajic V.B."/>
            <person name="Brenner S.E."/>
            <person name="Batalov S."/>
            <person name="Forrest A.R."/>
            <person name="Zavolan M."/>
            <person name="Davis M.J."/>
            <person name="Wilming L.G."/>
            <person name="Aidinis V."/>
            <person name="Allen J.E."/>
            <person name="Ambesi-Impiombato A."/>
            <person name="Apweiler R."/>
            <person name="Aturaliya R.N."/>
            <person name="Bailey T.L."/>
            <person name="Bansal M."/>
            <person name="Baxter L."/>
            <person name="Beisel K.W."/>
            <person name="Bersano T."/>
            <person name="Bono H."/>
            <person name="Chalk A.M."/>
            <person name="Chiu K.P."/>
            <person name="Choudhary V."/>
            <person name="Christoffels A."/>
            <person name="Clutterbuck D.R."/>
            <person name="Crowe M.L."/>
            <person name="Dalla E."/>
            <person name="Dalrymple B.P."/>
            <person name="de Bono B."/>
            <person name="Della Gatta G."/>
            <person name="di Bernardo D."/>
            <person name="Down T."/>
            <person name="Engstrom P."/>
            <person name="Fagiolini M."/>
            <person name="Faulkner G."/>
            <person name="Fletcher C.F."/>
            <person name="Fukushima T."/>
            <person name="Furuno M."/>
            <person name="Futaki S."/>
            <person name="Gariboldi M."/>
            <person name="Georgii-Hemming P."/>
            <person name="Gingeras T.R."/>
            <person name="Gojobori T."/>
            <person name="Green R.E."/>
            <person name="Gustincich S."/>
            <person name="Harbers M."/>
            <person name="Hayashi Y."/>
            <person name="Hensch T.K."/>
            <person name="Hirokawa N."/>
            <person name="Hill D."/>
            <person name="Huminiecki L."/>
            <person name="Iacono M."/>
            <person name="Ikeo K."/>
            <person name="Iwama A."/>
            <person name="Ishikawa T."/>
            <person name="Jakt M."/>
            <person name="Kanapin A."/>
            <person name="Katoh M."/>
            <person name="Kawasawa Y."/>
            <person name="Kelso J."/>
            <person name="Kitamura H."/>
            <person name="Kitano H."/>
            <person name="Kollias G."/>
            <person name="Krishnan S.P."/>
            <person name="Kruger A."/>
            <person name="Kummerfeld S.K."/>
            <person name="Kurochkin I.V."/>
            <person name="Lareau L.F."/>
            <person name="Lazarevic D."/>
            <person name="Lipovich L."/>
            <person name="Liu J."/>
            <person name="Liuni S."/>
            <person name="McWilliam S."/>
            <person name="Madan Babu M."/>
            <person name="Madera M."/>
            <person name="Marchionni L."/>
            <person name="Matsuda H."/>
            <person name="Matsuzawa S."/>
            <person name="Miki H."/>
            <person name="Mignone F."/>
            <person name="Miyake S."/>
            <person name="Morris K."/>
            <person name="Mottagui-Tabar S."/>
            <person name="Mulder N."/>
            <person name="Nakano N."/>
            <person name="Nakauchi H."/>
            <person name="Ng P."/>
            <person name="Nilsson R."/>
            <person name="Nishiguchi S."/>
            <person name="Nishikawa S."/>
            <person name="Nori F."/>
            <person name="Ohara O."/>
            <person name="Okazaki Y."/>
            <person name="Orlando V."/>
            <person name="Pang K.C."/>
            <person name="Pavan W.J."/>
            <person name="Pavesi G."/>
            <person name="Pesole G."/>
            <person name="Petrovsky N."/>
            <person name="Piazza S."/>
            <person name="Reed J."/>
            <person name="Reid J.F."/>
            <person name="Ring B.Z."/>
            <person name="Ringwald M."/>
            <person name="Rost B."/>
            <person name="Ruan Y."/>
            <person name="Salzberg S.L."/>
            <person name="Sandelin A."/>
            <person name="Schneider C."/>
            <person name="Schoenbach C."/>
            <person name="Sekiguchi K."/>
            <person name="Semple C.A."/>
            <person name="Seno S."/>
            <person name="Sessa L."/>
            <person name="Sheng Y."/>
            <person name="Shibata Y."/>
            <person name="Shimada H."/>
            <person name="Shimada K."/>
            <person name="Silva D."/>
            <person name="Sinclair B."/>
            <person name="Sperling S."/>
            <person name="Stupka E."/>
            <person name="Sugiura K."/>
            <person name="Sultana R."/>
            <person name="Takenaka Y."/>
            <person name="Taki K."/>
            <person name="Tammoja K."/>
            <person name="Tan S.L."/>
            <person name="Tang S."/>
            <person name="Taylor M.S."/>
            <person name="Tegner J."/>
            <person name="Teichmann S.A."/>
            <person name="Ueda H.R."/>
            <person name="van Nimwegen E."/>
            <person name="Verardo R."/>
            <person name="Wei C.L."/>
            <person name="Yagi K."/>
            <person name="Yamanishi H."/>
            <person name="Zabarovsky E."/>
            <person name="Zhu S."/>
            <person name="Zimmer A."/>
            <person name="Hide W."/>
            <person name="Bult C."/>
            <person name="Grimmond S.M."/>
            <person name="Teasdale R.D."/>
            <person name="Liu E.T."/>
            <person name="Brusic V."/>
            <person name="Quackenbush J."/>
            <person name="Wahlestedt C."/>
            <person name="Mattick J.S."/>
            <person name="Hume D.A."/>
            <person name="Kai C."/>
            <person name="Sasaki D."/>
            <person name="Tomaru Y."/>
            <person name="Fukuda S."/>
            <person name="Kanamori-Katayama M."/>
            <person name="Suzuki M."/>
            <person name="Aoki J."/>
            <person name="Arakawa T."/>
            <person name="Iida J."/>
            <person name="Imamura K."/>
            <person name="Itoh M."/>
            <person name="Kato T."/>
            <person name="Kawaji H."/>
            <person name="Kawagashira N."/>
            <person name="Kawashima T."/>
            <person name="Kojima M."/>
            <person name="Kondo S."/>
            <person name="Konno H."/>
            <person name="Nakano K."/>
            <person name="Ninomiya N."/>
            <person name="Nishio T."/>
            <person name="Okada M."/>
            <person name="Plessy C."/>
            <person name="Shibata K."/>
            <person name="Shiraki T."/>
            <person name="Suzuki S."/>
            <person name="Tagami M."/>
            <person name="Waki K."/>
            <person name="Watahiki A."/>
            <person name="Okamura-Oho Y."/>
            <person name="Suzuki H."/>
            <person name="Kawai J."/>
            <person name="Hayashizaki Y."/>
        </authorList>
    </citation>
    <scope>NUCLEOTIDE SEQUENCE [LARGE SCALE MRNA]</scope>
    <source>
        <strain>NOD</strain>
        <tissue>Spleen</tissue>
    </source>
</reference>
<proteinExistence type="evidence at protein level"/>
<keyword id="KW-1015">Disulfide bond</keyword>
<keyword id="KW-0325">Glycoprotein</keyword>
<keyword id="KW-1185">Reference proteome</keyword>
<keyword id="KW-0677">Repeat</keyword>
<keyword id="KW-0964">Secreted</keyword>
<keyword id="KW-0732">Signal</keyword>
<dbReference type="EMBL" id="AB096928">
    <property type="protein sequence ID" value="BAC76875.1"/>
    <property type="molecule type" value="mRNA"/>
</dbReference>
<dbReference type="EMBL" id="AK156991">
    <property type="protein sequence ID" value="BAE33926.1"/>
    <property type="molecule type" value="mRNA"/>
</dbReference>
<dbReference type="CCDS" id="CCDS15824.1"/>
<dbReference type="RefSeq" id="NP_084257.1">
    <property type="nucleotide sequence ID" value="NM_029981.2"/>
</dbReference>
<dbReference type="RefSeq" id="XP_036018614.1">
    <property type="nucleotide sequence ID" value="XM_036162721.1"/>
</dbReference>
<dbReference type="SMR" id="Q7TSK7"/>
<dbReference type="BioGRID" id="218926">
    <property type="interactions" value="1"/>
</dbReference>
<dbReference type="FunCoup" id="Q7TSK7">
    <property type="interactions" value="105"/>
</dbReference>
<dbReference type="IntAct" id="Q7TSK7">
    <property type="interactions" value="3"/>
</dbReference>
<dbReference type="STRING" id="10090.ENSMUSP00000088774"/>
<dbReference type="GlyCosmos" id="Q7TSK7">
    <property type="glycosylation" value="10 sites, No reported glycans"/>
</dbReference>
<dbReference type="GlyGen" id="Q7TSK7">
    <property type="glycosylation" value="12 sites, 2 N-linked glycans (2 sites)"/>
</dbReference>
<dbReference type="iPTMnet" id="Q7TSK7"/>
<dbReference type="PhosphoSitePlus" id="Q7TSK7"/>
<dbReference type="SwissPalm" id="Q7TSK7"/>
<dbReference type="jPOST" id="Q7TSK7"/>
<dbReference type="PaxDb" id="10090-ENSMUSP00000088774"/>
<dbReference type="ProteomicsDB" id="265149"/>
<dbReference type="Antibodypedia" id="45302">
    <property type="antibodies" value="86 antibodies from 24 providers"/>
</dbReference>
<dbReference type="DNASU" id="77794"/>
<dbReference type="Ensembl" id="ENSMUST00000091233.7">
    <property type="protein sequence ID" value="ENSMUSP00000088774.7"/>
    <property type="gene ID" value="ENSMUSG00000036040.15"/>
</dbReference>
<dbReference type="GeneID" id="77794"/>
<dbReference type="KEGG" id="mmu:77794"/>
<dbReference type="UCSC" id="uc008ixa.1">
    <property type="organism name" value="mouse"/>
</dbReference>
<dbReference type="AGR" id="MGI:1925044"/>
<dbReference type="CTD" id="9719"/>
<dbReference type="MGI" id="MGI:1925044">
    <property type="gene designation" value="Adamtsl2"/>
</dbReference>
<dbReference type="VEuPathDB" id="HostDB:ENSMUSG00000036040"/>
<dbReference type="eggNOG" id="KOG3538">
    <property type="taxonomic scope" value="Eukaryota"/>
</dbReference>
<dbReference type="GeneTree" id="ENSGT00940000159447"/>
<dbReference type="HOGENOM" id="CLU_000660_6_1_1"/>
<dbReference type="InParanoid" id="Q7TSK7"/>
<dbReference type="OMA" id="RETNEVC"/>
<dbReference type="OrthoDB" id="5781878at2759"/>
<dbReference type="PhylomeDB" id="Q7TSK7"/>
<dbReference type="TreeFam" id="TF316874"/>
<dbReference type="Reactome" id="R-MMU-5173214">
    <property type="pathway name" value="O-glycosylation of TSR domain-containing proteins"/>
</dbReference>
<dbReference type="BioGRID-ORCS" id="77794">
    <property type="hits" value="1 hit in 79 CRISPR screens"/>
</dbReference>
<dbReference type="PRO" id="PR:Q7TSK7"/>
<dbReference type="Proteomes" id="UP000000589">
    <property type="component" value="Chromosome 2"/>
</dbReference>
<dbReference type="RNAct" id="Q7TSK7">
    <property type="molecule type" value="protein"/>
</dbReference>
<dbReference type="Bgee" id="ENSMUSG00000036040">
    <property type="expression patterns" value="Expressed in left lung lobe and 139 other cell types or tissues"/>
</dbReference>
<dbReference type="ExpressionAtlas" id="Q7TSK7">
    <property type="expression patterns" value="baseline and differential"/>
</dbReference>
<dbReference type="GO" id="GO:0031012">
    <property type="term" value="C:extracellular matrix"/>
    <property type="evidence" value="ECO:0000314"/>
    <property type="project" value="MGI"/>
</dbReference>
<dbReference type="GO" id="GO:0005576">
    <property type="term" value="C:extracellular region"/>
    <property type="evidence" value="ECO:0000314"/>
    <property type="project" value="MGI"/>
</dbReference>
<dbReference type="GO" id="GO:0050436">
    <property type="term" value="F:microfibril binding"/>
    <property type="evidence" value="ECO:0000353"/>
    <property type="project" value="MGI"/>
</dbReference>
<dbReference type="GO" id="GO:0030198">
    <property type="term" value="P:extracellular matrix organization"/>
    <property type="evidence" value="ECO:0000315"/>
    <property type="project" value="MGI"/>
</dbReference>
<dbReference type="GO" id="GO:0060481">
    <property type="term" value="P:lobar bronchus epithelium development"/>
    <property type="evidence" value="ECO:0000315"/>
    <property type="project" value="MGI"/>
</dbReference>
<dbReference type="GO" id="GO:0030512">
    <property type="term" value="P:negative regulation of transforming growth factor beta receptor signaling pathway"/>
    <property type="evidence" value="ECO:0000315"/>
    <property type="project" value="MGI"/>
</dbReference>
<dbReference type="FunFam" id="2.60.120.830:FF:000001">
    <property type="entry name" value="A disintegrin and metalloproteinase with thrombospondin motifs 1"/>
    <property type="match status" value="1"/>
</dbReference>
<dbReference type="FunFam" id="2.20.100.10:FF:000042">
    <property type="entry name" value="ADAMTS like 2"/>
    <property type="match status" value="1"/>
</dbReference>
<dbReference type="FunFam" id="2.20.100.10:FF:000078">
    <property type="entry name" value="ADAMTS like 2"/>
    <property type="match status" value="1"/>
</dbReference>
<dbReference type="Gene3D" id="2.60.120.830">
    <property type="match status" value="1"/>
</dbReference>
<dbReference type="Gene3D" id="2.20.100.10">
    <property type="entry name" value="Thrombospondin type-1 (TSP1) repeat"/>
    <property type="match status" value="5"/>
</dbReference>
<dbReference type="InterPro" id="IPR013273">
    <property type="entry name" value="ADAMTS/ADAMTS-like"/>
</dbReference>
<dbReference type="InterPro" id="IPR050439">
    <property type="entry name" value="ADAMTS_ADAMTS-like"/>
</dbReference>
<dbReference type="InterPro" id="IPR045371">
    <property type="entry name" value="ADAMTS_CR_3"/>
</dbReference>
<dbReference type="InterPro" id="IPR010294">
    <property type="entry name" value="ADAMTS_spacer1"/>
</dbReference>
<dbReference type="InterPro" id="IPR010909">
    <property type="entry name" value="PLAC"/>
</dbReference>
<dbReference type="InterPro" id="IPR000884">
    <property type="entry name" value="TSP1_rpt"/>
</dbReference>
<dbReference type="InterPro" id="IPR036383">
    <property type="entry name" value="TSP1_rpt_sf"/>
</dbReference>
<dbReference type="PANTHER" id="PTHR13723">
    <property type="entry name" value="ADAMTS A DISINTEGRIN AND METALLOPROTEASE WITH THROMBOSPONDIN MOTIFS PROTEASE"/>
    <property type="match status" value="1"/>
</dbReference>
<dbReference type="PANTHER" id="PTHR13723:SF147">
    <property type="entry name" value="ADAMTS-LIKE PROTEIN 2"/>
    <property type="match status" value="1"/>
</dbReference>
<dbReference type="Pfam" id="PF19236">
    <property type="entry name" value="ADAMTS_CR_3"/>
    <property type="match status" value="1"/>
</dbReference>
<dbReference type="Pfam" id="PF05986">
    <property type="entry name" value="ADAMTS_spacer1"/>
    <property type="match status" value="1"/>
</dbReference>
<dbReference type="Pfam" id="PF08686">
    <property type="entry name" value="PLAC"/>
    <property type="match status" value="1"/>
</dbReference>
<dbReference type="Pfam" id="PF19030">
    <property type="entry name" value="TSP1_ADAMTS"/>
    <property type="match status" value="4"/>
</dbReference>
<dbReference type="Pfam" id="PF00090">
    <property type="entry name" value="TSP_1"/>
    <property type="match status" value="1"/>
</dbReference>
<dbReference type="PRINTS" id="PR01857">
    <property type="entry name" value="ADAMTSFAMILY"/>
</dbReference>
<dbReference type="SMART" id="SM00209">
    <property type="entry name" value="TSP1"/>
    <property type="match status" value="7"/>
</dbReference>
<dbReference type="SUPFAM" id="SSF82895">
    <property type="entry name" value="TSP-1 type 1 repeat"/>
    <property type="match status" value="7"/>
</dbReference>
<dbReference type="PROSITE" id="PS50900">
    <property type="entry name" value="PLAC"/>
    <property type="match status" value="1"/>
</dbReference>
<dbReference type="PROSITE" id="PS50092">
    <property type="entry name" value="TSP1"/>
    <property type="match status" value="4"/>
</dbReference>
<comment type="subunit">
    <text evidence="1">Interacts with LTBP1.</text>
</comment>
<comment type="interaction">
    <interactant intactId="EBI-25406979">
        <id>Q7TSK7</id>
    </interactant>
    <interactant intactId="EBI-642911">
        <id>P28301</id>
        <label>Lox</label>
    </interactant>
    <organismsDiffer>false</organismsDiffer>
    <experiments>3</experiments>
</comment>
<comment type="interaction">
    <interactant intactId="EBI-25406979">
        <id>Q7TSK7</id>
    </interactant>
    <interactant intactId="EBI-723960">
        <id>P58215</id>
        <label>LOXL3</label>
    </interactant>
    <organismsDiffer>true</organismsDiffer>
    <experiments>2</experiments>
</comment>
<comment type="subcellular location">
    <subcellularLocation>
        <location evidence="6">Secreted</location>
    </subcellularLocation>
</comment>
<comment type="PTM">
    <text evidence="1">Glycosylated (By similarity). Can be O-fucosylated by POFUT2 on a serine or a threonine residue found within the consensus sequence C1-X(2)-(S/T)-C2-G of the TSP type-1 repeat domains where C1 and C2 are the first and second cysteine residue of the repeat, respectively. Fucosylated repeats can then be further glycosylated by the addition of a beta-1,3-glucose residue by the glucosyltransferase, B3GALTL. Fucosylation mediates the efficient secretion of ADAMTS family members. Can also be C-glycosylated with one or two mannose molecules on tryptophan residues within the consensus sequence W-X-X-W of the TPRs, and N-glycosylated. These other glycosylations can also facilitate secretion (By similarity).</text>
</comment>
<comment type="caution">
    <text evidence="6">Although strongly similar to members of the ADAMTS family it lacks the metalloprotease and disintegrin-like domains which are typical of that family.</text>
</comment>